<dbReference type="EMBL" id="CR450776">
    <property type="status" value="NOT_ANNOTATED_CDS"/>
    <property type="molecule type" value="Genomic_DNA"/>
</dbReference>
<dbReference type="RefSeq" id="XP_009302307.1">
    <property type="nucleotide sequence ID" value="XM_009304032.2"/>
</dbReference>
<dbReference type="FunCoup" id="B8JI67">
    <property type="interactions" value="1726"/>
</dbReference>
<dbReference type="PaxDb" id="7955-ENSDARP00000062374"/>
<dbReference type="GeneID" id="100006525"/>
<dbReference type="KEGG" id="dre:100006525"/>
<dbReference type="AGR" id="ZFIN:ZDB-GENE-081104-418"/>
<dbReference type="CTD" id="388730"/>
<dbReference type="ZFIN" id="ZDB-GENE-081104-418">
    <property type="gene designation" value="tmem81"/>
</dbReference>
<dbReference type="eggNOG" id="ENOG502RYDZ">
    <property type="taxonomic scope" value="Eukaryota"/>
</dbReference>
<dbReference type="OMA" id="ECLTNWL"/>
<dbReference type="OrthoDB" id="9390762at2759"/>
<dbReference type="PhylomeDB" id="B8JI67"/>
<dbReference type="TreeFam" id="TF333177"/>
<dbReference type="Proteomes" id="UP000000437">
    <property type="component" value="Chromosome 8"/>
</dbReference>
<dbReference type="Bgee" id="ENSDARG00000042536">
    <property type="expression patterns" value="Expressed in testis and 1 other cell type or tissue"/>
</dbReference>
<dbReference type="GO" id="GO:0005886">
    <property type="term" value="C:plasma membrane"/>
    <property type="evidence" value="ECO:0007669"/>
    <property type="project" value="UniProtKB-SubCell"/>
</dbReference>
<dbReference type="GO" id="GO:0035036">
    <property type="term" value="P:sperm-egg recognition"/>
    <property type="evidence" value="ECO:0000314"/>
    <property type="project" value="UniProtKB"/>
</dbReference>
<dbReference type="Gene3D" id="2.60.40.10">
    <property type="entry name" value="Immunoglobulins"/>
    <property type="match status" value="1"/>
</dbReference>
<dbReference type="InterPro" id="IPR007110">
    <property type="entry name" value="Ig-like_dom"/>
</dbReference>
<dbReference type="InterPro" id="IPR036179">
    <property type="entry name" value="Ig-like_dom_sf"/>
</dbReference>
<dbReference type="InterPro" id="IPR013783">
    <property type="entry name" value="Ig-like_fold"/>
</dbReference>
<dbReference type="InterPro" id="IPR039293">
    <property type="entry name" value="TMEM81"/>
</dbReference>
<dbReference type="PANTHER" id="PTHR35670">
    <property type="entry name" value="TRANSMEMBRANE PROTEIN 81"/>
    <property type="match status" value="1"/>
</dbReference>
<dbReference type="PANTHER" id="PTHR35670:SF1">
    <property type="entry name" value="TRANSMEMBRANE PROTEIN 81"/>
    <property type="match status" value="1"/>
</dbReference>
<dbReference type="SUPFAM" id="SSF48726">
    <property type="entry name" value="Immunoglobulin"/>
    <property type="match status" value="1"/>
</dbReference>
<dbReference type="PROSITE" id="PS50835">
    <property type="entry name" value="IG_LIKE"/>
    <property type="match status" value="1"/>
</dbReference>
<protein>
    <recommendedName>
        <fullName>Transmembrane protein 81</fullName>
    </recommendedName>
</protein>
<organism>
    <name type="scientific">Danio rerio</name>
    <name type="common">Zebrafish</name>
    <name type="synonym">Brachydanio rerio</name>
    <dbReference type="NCBI Taxonomy" id="7955"/>
    <lineage>
        <taxon>Eukaryota</taxon>
        <taxon>Metazoa</taxon>
        <taxon>Chordata</taxon>
        <taxon>Craniata</taxon>
        <taxon>Vertebrata</taxon>
        <taxon>Euteleostomi</taxon>
        <taxon>Actinopterygii</taxon>
        <taxon>Neopterygii</taxon>
        <taxon>Teleostei</taxon>
        <taxon>Ostariophysi</taxon>
        <taxon>Cypriniformes</taxon>
        <taxon>Danionidae</taxon>
        <taxon>Danioninae</taxon>
        <taxon>Danio</taxon>
    </lineage>
</organism>
<reference evidence="5" key="1">
    <citation type="journal article" date="2013" name="Nature">
        <title>The zebrafish reference genome sequence and its relationship to the human genome.</title>
        <authorList>
            <person name="Howe K."/>
            <person name="Clark M.D."/>
            <person name="Torroja C.F."/>
            <person name="Torrance J."/>
            <person name="Berthelot C."/>
            <person name="Muffato M."/>
            <person name="Collins J.E."/>
            <person name="Humphray S."/>
            <person name="McLaren K."/>
            <person name="Matthews L."/>
            <person name="McLaren S."/>
            <person name="Sealy I."/>
            <person name="Caccamo M."/>
            <person name="Churcher C."/>
            <person name="Scott C."/>
            <person name="Barrett J.C."/>
            <person name="Koch R."/>
            <person name="Rauch G.J."/>
            <person name="White S."/>
            <person name="Chow W."/>
            <person name="Kilian B."/>
            <person name="Quintais L.T."/>
            <person name="Guerra-Assuncao J.A."/>
            <person name="Zhou Y."/>
            <person name="Gu Y."/>
            <person name="Yen J."/>
            <person name="Vogel J.H."/>
            <person name="Eyre T."/>
            <person name="Redmond S."/>
            <person name="Banerjee R."/>
            <person name="Chi J."/>
            <person name="Fu B."/>
            <person name="Langley E."/>
            <person name="Maguire S.F."/>
            <person name="Laird G.K."/>
            <person name="Lloyd D."/>
            <person name="Kenyon E."/>
            <person name="Donaldson S."/>
            <person name="Sehra H."/>
            <person name="Almeida-King J."/>
            <person name="Loveland J."/>
            <person name="Trevanion S."/>
            <person name="Jones M."/>
            <person name="Quail M."/>
            <person name="Willey D."/>
            <person name="Hunt A."/>
            <person name="Burton J."/>
            <person name="Sims S."/>
            <person name="McLay K."/>
            <person name="Plumb B."/>
            <person name="Davis J."/>
            <person name="Clee C."/>
            <person name="Oliver K."/>
            <person name="Clark R."/>
            <person name="Riddle C."/>
            <person name="Elliot D."/>
            <person name="Threadgold G."/>
            <person name="Harden G."/>
            <person name="Ware D."/>
            <person name="Begum S."/>
            <person name="Mortimore B."/>
            <person name="Kerry G."/>
            <person name="Heath P."/>
            <person name="Phillimore B."/>
            <person name="Tracey A."/>
            <person name="Corby N."/>
            <person name="Dunn M."/>
            <person name="Johnson C."/>
            <person name="Wood J."/>
            <person name="Clark S."/>
            <person name="Pelan S."/>
            <person name="Griffiths G."/>
            <person name="Smith M."/>
            <person name="Glithero R."/>
            <person name="Howden P."/>
            <person name="Barker N."/>
            <person name="Lloyd C."/>
            <person name="Stevens C."/>
            <person name="Harley J."/>
            <person name="Holt K."/>
            <person name="Panagiotidis G."/>
            <person name="Lovell J."/>
            <person name="Beasley H."/>
            <person name="Henderson C."/>
            <person name="Gordon D."/>
            <person name="Auger K."/>
            <person name="Wright D."/>
            <person name="Collins J."/>
            <person name="Raisen C."/>
            <person name="Dyer L."/>
            <person name="Leung K."/>
            <person name="Robertson L."/>
            <person name="Ambridge K."/>
            <person name="Leongamornlert D."/>
            <person name="McGuire S."/>
            <person name="Gilderthorp R."/>
            <person name="Griffiths C."/>
            <person name="Manthravadi D."/>
            <person name="Nichol S."/>
            <person name="Barker G."/>
            <person name="Whitehead S."/>
            <person name="Kay M."/>
            <person name="Brown J."/>
            <person name="Murnane C."/>
            <person name="Gray E."/>
            <person name="Humphries M."/>
            <person name="Sycamore N."/>
            <person name="Barker D."/>
            <person name="Saunders D."/>
            <person name="Wallis J."/>
            <person name="Babbage A."/>
            <person name="Hammond S."/>
            <person name="Mashreghi-Mohammadi M."/>
            <person name="Barr L."/>
            <person name="Martin S."/>
            <person name="Wray P."/>
            <person name="Ellington A."/>
            <person name="Matthews N."/>
            <person name="Ellwood M."/>
            <person name="Woodmansey R."/>
            <person name="Clark G."/>
            <person name="Cooper J."/>
            <person name="Tromans A."/>
            <person name="Grafham D."/>
            <person name="Skuce C."/>
            <person name="Pandian R."/>
            <person name="Andrews R."/>
            <person name="Harrison E."/>
            <person name="Kimberley A."/>
            <person name="Garnett J."/>
            <person name="Fosker N."/>
            <person name="Hall R."/>
            <person name="Garner P."/>
            <person name="Kelly D."/>
            <person name="Bird C."/>
            <person name="Palmer S."/>
            <person name="Gehring I."/>
            <person name="Berger A."/>
            <person name="Dooley C.M."/>
            <person name="Ersan-Urun Z."/>
            <person name="Eser C."/>
            <person name="Geiger H."/>
            <person name="Geisler M."/>
            <person name="Karotki L."/>
            <person name="Kirn A."/>
            <person name="Konantz J."/>
            <person name="Konantz M."/>
            <person name="Oberlander M."/>
            <person name="Rudolph-Geiger S."/>
            <person name="Teucke M."/>
            <person name="Lanz C."/>
            <person name="Raddatz G."/>
            <person name="Osoegawa K."/>
            <person name="Zhu B."/>
            <person name="Rapp A."/>
            <person name="Widaa S."/>
            <person name="Langford C."/>
            <person name="Yang F."/>
            <person name="Schuster S.C."/>
            <person name="Carter N.P."/>
            <person name="Harrow J."/>
            <person name="Ning Z."/>
            <person name="Herrero J."/>
            <person name="Searle S.M."/>
            <person name="Enright A."/>
            <person name="Geisler R."/>
            <person name="Plasterk R.H."/>
            <person name="Lee C."/>
            <person name="Westerfield M."/>
            <person name="de Jong P.J."/>
            <person name="Zon L.I."/>
            <person name="Postlethwait J.H."/>
            <person name="Nusslein-Volhard C."/>
            <person name="Hubbard T.J."/>
            <person name="Roest Crollius H."/>
            <person name="Rogers J."/>
            <person name="Stemple D.L."/>
        </authorList>
    </citation>
    <scope>NUCLEOTIDE SEQUENCE [LARGE SCALE GENOMIC DNA]</scope>
    <source>
        <strain>Tuebingen</strain>
    </source>
</reference>
<reference key="2">
    <citation type="journal article" date="2024" name="Cell">
        <title>A conserved fertilization complex bridges sperm and egg in vertebrates.</title>
        <authorList>
            <person name="Deneke V.E."/>
            <person name="Blaha A."/>
            <person name="Lu Y."/>
            <person name="Suwita J.P."/>
            <person name="Draper J.M."/>
            <person name="Phan C.S."/>
            <person name="Panser K."/>
            <person name="Schleiffer A."/>
            <person name="Jacob L."/>
            <person name="Humer T."/>
            <person name="Stejskal K."/>
            <person name="Krssakova G."/>
            <person name="Roitinger E."/>
            <person name="Handler D."/>
            <person name="Kamoshita M."/>
            <person name="Vance T.D.R."/>
            <person name="Wang X."/>
            <person name="Surm J.M."/>
            <person name="Moran Y."/>
            <person name="Lee J.E."/>
            <person name="Ikawa M."/>
            <person name="Pauli A."/>
        </authorList>
    </citation>
    <scope>FUNCTION</scope>
    <scope>DISRUPTION PHENOTYPE</scope>
    <scope>TISSUE SPECIFICITY</scope>
    <scope>SUBCELLULAR LOCATION</scope>
    <scope>INTERACTION WITH IZUMO1 AND SPACA6</scope>
</reference>
<name>TMM81_DANRE</name>
<proteinExistence type="evidence at protein level"/>
<accession>B8JI67</accession>
<accession>A0A8M3BBU0</accession>
<evidence type="ECO:0000255" key="1"/>
<evidence type="ECO:0000255" key="2">
    <source>
        <dbReference type="PROSITE-ProRule" id="PRU00114"/>
    </source>
</evidence>
<evidence type="ECO:0000269" key="3">
    <source>
    </source>
</evidence>
<evidence type="ECO:0000305" key="4">
    <source>
    </source>
</evidence>
<evidence type="ECO:0000312" key="5">
    <source>
        <dbReference type="Proteomes" id="UP000000437"/>
    </source>
</evidence>
<evidence type="ECO:0000312" key="6">
    <source>
        <dbReference type="RefSeq" id="XP_009302307.1"/>
    </source>
</evidence>
<evidence type="ECO:0000312" key="7">
    <source>
        <dbReference type="ZFIN" id="ZDB-GENE-081104-418"/>
    </source>
</evidence>
<comment type="function">
    <text evidence="3">Essential fertilization factor required for male fertility. Part of a conserved trimeric sperm complex with the essential fertilization factors IZUMO1 and SPACA6 which bridges sperm and oocyte membranes during fertilization by binding to IZUMO1R/JUNO on the oocyte.</text>
</comment>
<comment type="subunit">
    <text evidence="3">Forms a complex with izumo1 and spaca6 on spermatocyte cell membrane. The complex binds to oocyte protein bncr.</text>
</comment>
<comment type="subcellular location">
    <subcellularLocation>
        <location evidence="4">Cell membrane</location>
        <topology evidence="1">Single-pass type I membrane protein</topology>
    </subcellularLocation>
</comment>
<comment type="tissue specificity">
    <text evidence="3">Expressed in sperm.</text>
</comment>
<comment type="disruption phenotype">
    <text evidence="3">Mutants develop normally into adult males and females. Male mutants are sterile, whereas females show normal fertility.</text>
</comment>
<sequence length="259" mass="29307">MALSTLWLVLMLWTSLFSDSQCSTLSQAELQELEQIHTWVVSRSFPCSVTCGLGLLTQELCPIGVTRNISTSSCKLRTISCLDSWQCGLKTQTATVGRRLVLDCLEEVMEAMGRFSFVVSWRFAFAIITTDDSLFTRYEALSLDKVVLDPLREEDSGTYRCDVLDTGKRRVKRMYKGVKVLSPKDLSLDFAQGLIHWEIPESRFANLTSSRKVYSSSTIRNIVIISVPLSFAIAVVIFIFLFCYSRRARRAAHLCQDNI</sequence>
<gene>
    <name evidence="7" type="primary">tmem81</name>
    <name evidence="6" type="synonym">si:dkey-48j7.3</name>
</gene>
<keyword id="KW-1003">Cell membrane</keyword>
<keyword id="KW-1015">Disulfide bond</keyword>
<keyword id="KW-0393">Immunoglobulin domain</keyword>
<keyword id="KW-0472">Membrane</keyword>
<keyword id="KW-1185">Reference proteome</keyword>
<keyword id="KW-0732">Signal</keyword>
<keyword id="KW-0812">Transmembrane</keyword>
<keyword id="KW-1133">Transmembrane helix</keyword>
<feature type="signal peptide" evidence="1">
    <location>
        <begin position="1"/>
        <end position="18"/>
    </location>
</feature>
<feature type="chain" id="PRO_5042802490" description="Transmembrane protein 81" evidence="1">
    <location>
        <begin position="19"/>
        <end position="259"/>
    </location>
</feature>
<feature type="topological domain" description="Extracellular" evidence="1">
    <location>
        <begin position="19"/>
        <end position="221"/>
    </location>
</feature>
<feature type="transmembrane region" description="Helical" evidence="1">
    <location>
        <begin position="222"/>
        <end position="242"/>
    </location>
</feature>
<feature type="topological domain" description="Cytoplasmic" evidence="1">
    <location>
        <begin position="243"/>
        <end position="259"/>
    </location>
</feature>
<feature type="domain" description="Ig-like" evidence="2">
    <location>
        <begin position="97"/>
        <end position="172"/>
    </location>
</feature>
<feature type="disulfide bond" evidence="2">
    <location>
        <begin position="104"/>
        <end position="161"/>
    </location>
</feature>